<proteinExistence type="evidence at transcript level"/>
<organism>
    <name type="scientific">Oryzias latipes</name>
    <name type="common">Japanese rice fish</name>
    <name type="synonym">Japanese killifish</name>
    <dbReference type="NCBI Taxonomy" id="8090"/>
    <lineage>
        <taxon>Eukaryota</taxon>
        <taxon>Metazoa</taxon>
        <taxon>Chordata</taxon>
        <taxon>Craniata</taxon>
        <taxon>Vertebrata</taxon>
        <taxon>Euteleostomi</taxon>
        <taxon>Actinopterygii</taxon>
        <taxon>Neopterygii</taxon>
        <taxon>Teleostei</taxon>
        <taxon>Neoteleostei</taxon>
        <taxon>Acanthomorphata</taxon>
        <taxon>Ovalentaria</taxon>
        <taxon>Atherinomorphae</taxon>
        <taxon>Beloniformes</taxon>
        <taxon>Adrianichthyidae</taxon>
        <taxon>Oryziinae</taxon>
        <taxon>Oryzias</taxon>
    </lineage>
</organism>
<protein>
    <recommendedName>
        <fullName>Cyclin-dependent kinase 1</fullName>
        <shortName>CDK1</shortName>
        <ecNumber evidence="1">2.7.11.22</ecNumber>
        <ecNumber evidence="2">2.7.11.23</ecNumber>
    </recommendedName>
    <alternativeName>
        <fullName>Cell division control protein 2 homolog</fullName>
    </alternativeName>
    <alternativeName>
        <fullName>Cell division protein kinase 1</fullName>
    </alternativeName>
    <alternativeName>
        <fullName>p34 protein kinase</fullName>
    </alternativeName>
</protein>
<comment type="function">
    <text evidence="1 3">Plays a key role in the control of the eukaryotic cell cycle by modulating the centrosome cycle as well as mitotic onset; promotes G2-M transition via association with multiple interphase cyclins (By similarity). During G2 and early mitosis, CDC25A/B/C-mediated dephosphorylation activates CDK1/cyclin complexes which phosphorylate several substrates that trigger at least centrosome separation, Golgi dynamics, nuclear envelope breakdown and chromosome condensation. Once chromosomes are condensed and aligned at the metaphase plate, CDK1 activity is switched off by WEE1- and PKMYT1-mediated phosphorylation to allow sister chromatid separation, chromosome decondensation, reformation of the nuclear envelope and cytokinesis (By similarity). Catalyzes lamin (LMNA, LMNB1 and LMNB2) phosphorylation at the onset of mitosis, promoting nuclear envelope breakdown (By similarity).</text>
</comment>
<comment type="catalytic activity">
    <reaction evidence="1">
        <text>L-seryl-[protein] + ATP = O-phospho-L-seryl-[protein] + ADP + H(+)</text>
        <dbReference type="Rhea" id="RHEA:17989"/>
        <dbReference type="Rhea" id="RHEA-COMP:9863"/>
        <dbReference type="Rhea" id="RHEA-COMP:11604"/>
        <dbReference type="ChEBI" id="CHEBI:15378"/>
        <dbReference type="ChEBI" id="CHEBI:29999"/>
        <dbReference type="ChEBI" id="CHEBI:30616"/>
        <dbReference type="ChEBI" id="CHEBI:83421"/>
        <dbReference type="ChEBI" id="CHEBI:456216"/>
        <dbReference type="EC" id="2.7.11.22"/>
    </reaction>
</comment>
<comment type="catalytic activity">
    <reaction evidence="1">
        <text>L-threonyl-[protein] + ATP = O-phospho-L-threonyl-[protein] + ADP + H(+)</text>
        <dbReference type="Rhea" id="RHEA:46608"/>
        <dbReference type="Rhea" id="RHEA-COMP:11060"/>
        <dbReference type="Rhea" id="RHEA-COMP:11605"/>
        <dbReference type="ChEBI" id="CHEBI:15378"/>
        <dbReference type="ChEBI" id="CHEBI:30013"/>
        <dbReference type="ChEBI" id="CHEBI:30616"/>
        <dbReference type="ChEBI" id="CHEBI:61977"/>
        <dbReference type="ChEBI" id="CHEBI:456216"/>
        <dbReference type="EC" id="2.7.11.22"/>
    </reaction>
</comment>
<comment type="catalytic activity">
    <reaction evidence="2">
        <text>[DNA-directed RNA polymerase] + ATP = phospho-[DNA-directed RNA polymerase] + ADP + H(+)</text>
        <dbReference type="Rhea" id="RHEA:10216"/>
        <dbReference type="Rhea" id="RHEA-COMP:11321"/>
        <dbReference type="Rhea" id="RHEA-COMP:11322"/>
        <dbReference type="ChEBI" id="CHEBI:15378"/>
        <dbReference type="ChEBI" id="CHEBI:30616"/>
        <dbReference type="ChEBI" id="CHEBI:43176"/>
        <dbReference type="ChEBI" id="CHEBI:68546"/>
        <dbReference type="ChEBI" id="CHEBI:456216"/>
        <dbReference type="EC" id="2.7.11.23"/>
    </reaction>
</comment>
<comment type="activity regulation">
    <text evidence="1">Phosphorylation at Thr-14 or Tyr-15 inactivates the enzyme, while phosphorylation at Thr-161 activates it.</text>
</comment>
<comment type="subunit">
    <text evidence="4">Forms a stable but non-covalent complex with cyclin B in mature oocytes.</text>
</comment>
<comment type="subcellular location">
    <subcellularLocation>
        <location evidence="1">Nucleus</location>
    </subcellularLocation>
    <subcellularLocation>
        <location evidence="1">Cytoplasm</location>
        <location evidence="1">Cytoskeleton</location>
        <location evidence="1">Microtubule organizing center</location>
        <location evidence="1">Centrosome</location>
    </subcellularLocation>
</comment>
<comment type="PTM">
    <text evidence="1">Phosphorylation at Tyr-15 by wee1 and wee2 inhibits the protein kinase activity and acts negative regulator of entry into mitosis (G2 to M transition).</text>
</comment>
<comment type="similarity">
    <text evidence="7">Belongs to the protein kinase superfamily. CMGC Ser/Thr protein kinase family. CDC2/CDKX subfamily.</text>
</comment>
<keyword id="KW-0067">ATP-binding</keyword>
<keyword id="KW-0131">Cell cycle</keyword>
<keyword id="KW-0132">Cell division</keyword>
<keyword id="KW-0963">Cytoplasm</keyword>
<keyword id="KW-0206">Cytoskeleton</keyword>
<keyword id="KW-0418">Kinase</keyword>
<keyword id="KW-0498">Mitosis</keyword>
<keyword id="KW-0547">Nucleotide-binding</keyword>
<keyword id="KW-0539">Nucleus</keyword>
<keyword id="KW-0597">Phosphoprotein</keyword>
<keyword id="KW-1185">Reference proteome</keyword>
<keyword id="KW-0723">Serine/threonine-protein kinase</keyword>
<keyword id="KW-0808">Transferase</keyword>
<dbReference type="EC" id="2.7.11.22" evidence="1"/>
<dbReference type="EC" id="2.7.11.23" evidence="2"/>
<dbReference type="EMBL" id="AB040436">
    <property type="protein sequence ID" value="BAB13720.1"/>
    <property type="molecule type" value="mRNA"/>
</dbReference>
<dbReference type="RefSeq" id="NP_001098309.1">
    <property type="nucleotide sequence ID" value="NM_001104839.1"/>
</dbReference>
<dbReference type="RefSeq" id="XP_020555395.1">
    <property type="nucleotide sequence ID" value="XM_020699736.1"/>
</dbReference>
<dbReference type="SMR" id="Q9DGD3"/>
<dbReference type="FunCoup" id="Q9DGD3">
    <property type="interactions" value="976"/>
</dbReference>
<dbReference type="STRING" id="8090.ENSORLP00000024000"/>
<dbReference type="BindingDB" id="Q9DGD3"/>
<dbReference type="Ensembl" id="ENSORLT00000024001.2">
    <property type="protein sequence ID" value="ENSORLP00000024000.1"/>
    <property type="gene ID" value="ENSORLG00000019266.2"/>
</dbReference>
<dbReference type="GeneID" id="100049478"/>
<dbReference type="KEGG" id="ola:100049478"/>
<dbReference type="CTD" id="983"/>
<dbReference type="eggNOG" id="KOG0594">
    <property type="taxonomic scope" value="Eukaryota"/>
</dbReference>
<dbReference type="GeneTree" id="ENSGT00940000153335"/>
<dbReference type="HOGENOM" id="CLU_000288_181_1_1"/>
<dbReference type="InParanoid" id="Q9DGD3"/>
<dbReference type="OMA" id="YLYQITR"/>
<dbReference type="OrthoDB" id="1732493at2759"/>
<dbReference type="TreeFam" id="TF101021"/>
<dbReference type="Proteomes" id="UP000001038">
    <property type="component" value="Chromosome 15"/>
</dbReference>
<dbReference type="Proteomes" id="UP000265180">
    <property type="component" value="Unplaced"/>
</dbReference>
<dbReference type="Proteomes" id="UP000265200">
    <property type="component" value="Unplaced"/>
</dbReference>
<dbReference type="Bgee" id="ENSORLG00000019266">
    <property type="expression patterns" value="Expressed in testis and 14 other cell types or tissues"/>
</dbReference>
<dbReference type="GO" id="GO:0005813">
    <property type="term" value="C:centrosome"/>
    <property type="evidence" value="ECO:0007669"/>
    <property type="project" value="UniProtKB-SubCell"/>
</dbReference>
<dbReference type="GO" id="GO:0005737">
    <property type="term" value="C:cytoplasm"/>
    <property type="evidence" value="ECO:0007669"/>
    <property type="project" value="UniProtKB-KW"/>
</dbReference>
<dbReference type="GO" id="GO:0005634">
    <property type="term" value="C:nucleus"/>
    <property type="evidence" value="ECO:0000318"/>
    <property type="project" value="GO_Central"/>
</dbReference>
<dbReference type="GO" id="GO:0005524">
    <property type="term" value="F:ATP binding"/>
    <property type="evidence" value="ECO:0007669"/>
    <property type="project" value="UniProtKB-KW"/>
</dbReference>
<dbReference type="GO" id="GO:0004693">
    <property type="term" value="F:cyclin-dependent protein serine/threonine kinase activity"/>
    <property type="evidence" value="ECO:0000250"/>
    <property type="project" value="UniProtKB"/>
</dbReference>
<dbReference type="GO" id="GO:0106310">
    <property type="term" value="F:protein serine kinase activity"/>
    <property type="evidence" value="ECO:0007669"/>
    <property type="project" value="RHEA"/>
</dbReference>
<dbReference type="GO" id="GO:0008353">
    <property type="term" value="F:RNA polymerase II CTD heptapeptide repeat kinase activity"/>
    <property type="evidence" value="ECO:0007669"/>
    <property type="project" value="UniProtKB-EC"/>
</dbReference>
<dbReference type="GO" id="GO:0035881">
    <property type="term" value="P:amacrine cell differentiation"/>
    <property type="evidence" value="ECO:0007669"/>
    <property type="project" value="Ensembl"/>
</dbReference>
<dbReference type="GO" id="GO:0051301">
    <property type="term" value="P:cell division"/>
    <property type="evidence" value="ECO:0007669"/>
    <property type="project" value="UniProtKB-KW"/>
</dbReference>
<dbReference type="GO" id="GO:0000086">
    <property type="term" value="P:G2/M transition of mitotic cell cycle"/>
    <property type="evidence" value="ECO:0000250"/>
    <property type="project" value="UniProtKB"/>
</dbReference>
<dbReference type="GO" id="GO:0007095">
    <property type="term" value="P:mitotic G2 DNA damage checkpoint signaling"/>
    <property type="evidence" value="ECO:0000318"/>
    <property type="project" value="GO_Central"/>
</dbReference>
<dbReference type="GO" id="GO:0009794">
    <property type="term" value="P:regulation of mitotic cell cycle, embryonic"/>
    <property type="evidence" value="ECO:0007669"/>
    <property type="project" value="Ensembl"/>
</dbReference>
<dbReference type="GO" id="GO:0042670">
    <property type="term" value="P:retinal cone cell differentiation"/>
    <property type="evidence" value="ECO:0007669"/>
    <property type="project" value="Ensembl"/>
</dbReference>
<dbReference type="GO" id="GO:0060221">
    <property type="term" value="P:retinal rod cell differentiation"/>
    <property type="evidence" value="ECO:0007669"/>
    <property type="project" value="Ensembl"/>
</dbReference>
<dbReference type="CDD" id="cd07861">
    <property type="entry name" value="STKc_CDK1_euk"/>
    <property type="match status" value="1"/>
</dbReference>
<dbReference type="FunFam" id="1.10.510.10:FF:000231">
    <property type="entry name" value="Cyclin-dependent kinase 1"/>
    <property type="match status" value="1"/>
</dbReference>
<dbReference type="FunFam" id="3.30.200.20:FF:000027">
    <property type="entry name" value="Putative Cyclin-dependent kinase 1"/>
    <property type="match status" value="1"/>
</dbReference>
<dbReference type="Gene3D" id="3.30.200.20">
    <property type="entry name" value="Phosphorylase Kinase, domain 1"/>
    <property type="match status" value="1"/>
</dbReference>
<dbReference type="Gene3D" id="1.10.510.10">
    <property type="entry name" value="Transferase(Phosphotransferase) domain 1"/>
    <property type="match status" value="1"/>
</dbReference>
<dbReference type="InterPro" id="IPR050108">
    <property type="entry name" value="CDK"/>
</dbReference>
<dbReference type="InterPro" id="IPR011009">
    <property type="entry name" value="Kinase-like_dom_sf"/>
</dbReference>
<dbReference type="InterPro" id="IPR000719">
    <property type="entry name" value="Prot_kinase_dom"/>
</dbReference>
<dbReference type="InterPro" id="IPR017441">
    <property type="entry name" value="Protein_kinase_ATP_BS"/>
</dbReference>
<dbReference type="InterPro" id="IPR008271">
    <property type="entry name" value="Ser/Thr_kinase_AS"/>
</dbReference>
<dbReference type="PANTHER" id="PTHR24056">
    <property type="entry name" value="CELL DIVISION PROTEIN KINASE"/>
    <property type="match status" value="1"/>
</dbReference>
<dbReference type="PANTHER" id="PTHR24056:SF334">
    <property type="entry name" value="CYCLIN-DEPENDENT KINASE 1"/>
    <property type="match status" value="1"/>
</dbReference>
<dbReference type="Pfam" id="PF00069">
    <property type="entry name" value="Pkinase"/>
    <property type="match status" value="1"/>
</dbReference>
<dbReference type="SMART" id="SM00220">
    <property type="entry name" value="S_TKc"/>
    <property type="match status" value="1"/>
</dbReference>
<dbReference type="SUPFAM" id="SSF56112">
    <property type="entry name" value="Protein kinase-like (PK-like)"/>
    <property type="match status" value="1"/>
</dbReference>
<dbReference type="PROSITE" id="PS00107">
    <property type="entry name" value="PROTEIN_KINASE_ATP"/>
    <property type="match status" value="1"/>
</dbReference>
<dbReference type="PROSITE" id="PS50011">
    <property type="entry name" value="PROTEIN_KINASE_DOM"/>
    <property type="match status" value="1"/>
</dbReference>
<dbReference type="PROSITE" id="PS00108">
    <property type="entry name" value="PROTEIN_KINASE_ST"/>
    <property type="match status" value="1"/>
</dbReference>
<feature type="chain" id="PRO_0000085732" description="Cyclin-dependent kinase 1">
    <location>
        <begin position="1"/>
        <end position="303"/>
    </location>
</feature>
<feature type="domain" description="Protein kinase" evidence="5">
    <location>
        <begin position="4"/>
        <end position="287"/>
    </location>
</feature>
<feature type="active site" description="Proton acceptor" evidence="5 6">
    <location>
        <position position="128"/>
    </location>
</feature>
<feature type="binding site" evidence="5">
    <location>
        <begin position="10"/>
        <end position="18"/>
    </location>
    <ligand>
        <name>ATP</name>
        <dbReference type="ChEBI" id="CHEBI:30616"/>
    </ligand>
</feature>
<feature type="binding site" evidence="5">
    <location>
        <position position="33"/>
    </location>
    <ligand>
        <name>ATP</name>
        <dbReference type="ChEBI" id="CHEBI:30616"/>
    </ligand>
</feature>
<feature type="modified residue" description="Phosphothreonine" evidence="1">
    <location>
        <position position="14"/>
    </location>
</feature>
<feature type="modified residue" description="Phosphotyrosine; by wee1 and wee2" evidence="1">
    <location>
        <position position="15"/>
    </location>
</feature>
<feature type="modified residue" description="Phosphothreonine; by cak" evidence="1">
    <location>
        <position position="161"/>
    </location>
</feature>
<evidence type="ECO:0000250" key="1">
    <source>
        <dbReference type="UniProtKB" id="P06493"/>
    </source>
</evidence>
<evidence type="ECO:0000250" key="2">
    <source>
        <dbReference type="UniProtKB" id="P11440"/>
    </source>
</evidence>
<evidence type="ECO:0000250" key="3">
    <source>
        <dbReference type="UniProtKB" id="P13863"/>
    </source>
</evidence>
<evidence type="ECO:0000250" key="4">
    <source>
        <dbReference type="UniProtKB" id="P51958"/>
    </source>
</evidence>
<evidence type="ECO:0000255" key="5">
    <source>
        <dbReference type="PROSITE-ProRule" id="PRU00159"/>
    </source>
</evidence>
<evidence type="ECO:0000255" key="6">
    <source>
        <dbReference type="PROSITE-ProRule" id="PRU10027"/>
    </source>
</evidence>
<evidence type="ECO:0000305" key="7"/>
<name>CDK1_ORYLA</name>
<reference key="1">
    <citation type="submission" date="2000-03" db="EMBL/GenBank/DDBJ databases">
        <title>cDNA cloning of medaka (Oryzias latipes) Cdc2.</title>
        <authorList>
            <person name="Yokota T."/>
            <person name="Yoshida N."/>
            <person name="Matsui H."/>
            <person name="Takahashi T."/>
            <person name="Yamashita M."/>
        </authorList>
    </citation>
    <scope>NUCLEOTIDE SEQUENCE [MRNA]</scope>
    <source>
        <tissue>Ovary</tissue>
    </source>
</reference>
<sequence length="303" mass="34688">MEDYVKIEKIGEGTYGVVYKGRHKSTGQVVAMKKIRLESEEEGVPSTAVREVSLLQELKHPNVVRLLDVLMQESRLYLIFEFLSMDLKKYLDSIPSGQYMDPMLVKSYLYQILEGIYFCHRRRVLHRDLKPQNLLIDNKGVIKLADFGLARAFGVPVRVYTHEVVTLWYRAPEVLLGSPRYSTPVDVWSTGTIFAELATKKPLFHGDSEIDQLFRIFRTLGTPNNDVWPDVESLPDYKNTFPKWKEGSLSSMVKNLDKNGLDLLAKMLIYNPPKRISAREAMTHPYFDDLDKSTLPAACINGV</sequence>
<gene>
    <name type="primary">cdk1</name>
    <name type="synonym">cdc2</name>
</gene>
<accession>Q9DGD3</accession>